<accession>P28618</accession>
<proteinExistence type="evidence at protein level"/>
<reference key="1">
    <citation type="journal article" date="1992" name="FEBS Lett.">
        <title>Characterization of the pcp gene encoding the pyrrolidone carboxyl peptidase of Bacillus subtilis.</title>
        <authorList>
            <person name="Awade A."/>
            <person name="Cleuziat P."/>
            <person name="Gonzales T."/>
            <person name="Robert-Baudouy J."/>
        </authorList>
    </citation>
    <scope>NUCLEOTIDE SEQUENCE [GENOMIC DNA]</scope>
    <source>
        <strain>168</strain>
    </source>
</reference>
<reference key="2">
    <citation type="journal article" date="1995" name="Microbiology">
        <title>Determination of a 21548 bp nucleotide sequence around the 24 degrees region of the Bacillus subtilis chromosome.</title>
        <authorList>
            <person name="Ogawa K."/>
            <person name="Akagawa E."/>
            <person name="Nakamura K."/>
            <person name="Yamane K."/>
        </authorList>
    </citation>
    <scope>NUCLEOTIDE SEQUENCE [GENOMIC DNA]</scope>
    <source>
        <strain>168</strain>
    </source>
</reference>
<reference key="3">
    <citation type="journal article" date="1997" name="Nature">
        <title>The complete genome sequence of the Gram-positive bacterium Bacillus subtilis.</title>
        <authorList>
            <person name="Kunst F."/>
            <person name="Ogasawara N."/>
            <person name="Moszer I."/>
            <person name="Albertini A.M."/>
            <person name="Alloni G."/>
            <person name="Azevedo V."/>
            <person name="Bertero M.G."/>
            <person name="Bessieres P."/>
            <person name="Bolotin A."/>
            <person name="Borchert S."/>
            <person name="Borriss R."/>
            <person name="Boursier L."/>
            <person name="Brans A."/>
            <person name="Braun M."/>
            <person name="Brignell S.C."/>
            <person name="Bron S."/>
            <person name="Brouillet S."/>
            <person name="Bruschi C.V."/>
            <person name="Caldwell B."/>
            <person name="Capuano V."/>
            <person name="Carter N.M."/>
            <person name="Choi S.-K."/>
            <person name="Codani J.-J."/>
            <person name="Connerton I.F."/>
            <person name="Cummings N.J."/>
            <person name="Daniel R.A."/>
            <person name="Denizot F."/>
            <person name="Devine K.M."/>
            <person name="Duesterhoeft A."/>
            <person name="Ehrlich S.D."/>
            <person name="Emmerson P.T."/>
            <person name="Entian K.-D."/>
            <person name="Errington J."/>
            <person name="Fabret C."/>
            <person name="Ferrari E."/>
            <person name="Foulger D."/>
            <person name="Fritz C."/>
            <person name="Fujita M."/>
            <person name="Fujita Y."/>
            <person name="Fuma S."/>
            <person name="Galizzi A."/>
            <person name="Galleron N."/>
            <person name="Ghim S.-Y."/>
            <person name="Glaser P."/>
            <person name="Goffeau A."/>
            <person name="Golightly E.J."/>
            <person name="Grandi G."/>
            <person name="Guiseppi G."/>
            <person name="Guy B.J."/>
            <person name="Haga K."/>
            <person name="Haiech J."/>
            <person name="Harwood C.R."/>
            <person name="Henaut A."/>
            <person name="Hilbert H."/>
            <person name="Holsappel S."/>
            <person name="Hosono S."/>
            <person name="Hullo M.-F."/>
            <person name="Itaya M."/>
            <person name="Jones L.-M."/>
            <person name="Joris B."/>
            <person name="Karamata D."/>
            <person name="Kasahara Y."/>
            <person name="Klaerr-Blanchard M."/>
            <person name="Klein C."/>
            <person name="Kobayashi Y."/>
            <person name="Koetter P."/>
            <person name="Koningstein G."/>
            <person name="Krogh S."/>
            <person name="Kumano M."/>
            <person name="Kurita K."/>
            <person name="Lapidus A."/>
            <person name="Lardinois S."/>
            <person name="Lauber J."/>
            <person name="Lazarevic V."/>
            <person name="Lee S.-M."/>
            <person name="Levine A."/>
            <person name="Liu H."/>
            <person name="Masuda S."/>
            <person name="Mauel C."/>
            <person name="Medigue C."/>
            <person name="Medina N."/>
            <person name="Mellado R.P."/>
            <person name="Mizuno M."/>
            <person name="Moestl D."/>
            <person name="Nakai S."/>
            <person name="Noback M."/>
            <person name="Noone D."/>
            <person name="O'Reilly M."/>
            <person name="Ogawa K."/>
            <person name="Ogiwara A."/>
            <person name="Oudega B."/>
            <person name="Park S.-H."/>
            <person name="Parro V."/>
            <person name="Pohl T.M."/>
            <person name="Portetelle D."/>
            <person name="Porwollik S."/>
            <person name="Prescott A.M."/>
            <person name="Presecan E."/>
            <person name="Pujic P."/>
            <person name="Purnelle B."/>
            <person name="Rapoport G."/>
            <person name="Rey M."/>
            <person name="Reynolds S."/>
            <person name="Rieger M."/>
            <person name="Rivolta C."/>
            <person name="Rocha E."/>
            <person name="Roche B."/>
            <person name="Rose M."/>
            <person name="Sadaie Y."/>
            <person name="Sato T."/>
            <person name="Scanlan E."/>
            <person name="Schleich S."/>
            <person name="Schroeter R."/>
            <person name="Scoffone F."/>
            <person name="Sekiguchi J."/>
            <person name="Sekowska A."/>
            <person name="Seror S.J."/>
            <person name="Serror P."/>
            <person name="Shin B.-S."/>
            <person name="Soldo B."/>
            <person name="Sorokin A."/>
            <person name="Tacconi E."/>
            <person name="Takagi T."/>
            <person name="Takahashi H."/>
            <person name="Takemaru K."/>
            <person name="Takeuchi M."/>
            <person name="Tamakoshi A."/>
            <person name="Tanaka T."/>
            <person name="Terpstra P."/>
            <person name="Tognoni A."/>
            <person name="Tosato V."/>
            <person name="Uchiyama S."/>
            <person name="Vandenbol M."/>
            <person name="Vannier F."/>
            <person name="Vassarotti A."/>
            <person name="Viari A."/>
            <person name="Wambutt R."/>
            <person name="Wedler E."/>
            <person name="Wedler H."/>
            <person name="Weitzenegger T."/>
            <person name="Winters P."/>
            <person name="Wipat A."/>
            <person name="Yamamoto H."/>
            <person name="Yamane K."/>
            <person name="Yasumoto K."/>
            <person name="Yata K."/>
            <person name="Yoshida K."/>
            <person name="Yoshikawa H.-F."/>
            <person name="Zumstein E."/>
            <person name="Yoshikawa H."/>
            <person name="Danchin A."/>
        </authorList>
    </citation>
    <scope>NUCLEOTIDE SEQUENCE [LARGE SCALE GENOMIC DNA]</scope>
    <source>
        <strain>168</strain>
    </source>
</reference>
<reference key="4">
    <citation type="journal article" date="1992" name="J. Chromatogr. A">
        <title>Purification and characterization of recombinant pyrrolidone carboxyl peptidase of Bacillus subtilis.</title>
        <authorList>
            <person name="Gonzales T."/>
            <person name="Awade A."/>
            <person name="Besson C."/>
            <person name="Robert-Baudouy J."/>
        </authorList>
    </citation>
    <scope>PROTEIN SEQUENCE OF 1-18</scope>
    <scope>CHARACTERIZATION</scope>
</reference>
<keyword id="KW-0963">Cytoplasm</keyword>
<keyword id="KW-0903">Direct protein sequencing</keyword>
<keyword id="KW-0378">Hydrolase</keyword>
<keyword id="KW-0645">Protease</keyword>
<keyword id="KW-1185">Reference proteome</keyword>
<keyword id="KW-0788">Thiol protease</keyword>
<name>PCP_BACSU</name>
<feature type="chain" id="PRO_0000184713" description="Pyrrolidone-carboxylate peptidase">
    <location>
        <begin position="1"/>
        <end position="215"/>
    </location>
</feature>
<feature type="active site" evidence="1">
    <location>
        <position position="81"/>
    </location>
</feature>
<feature type="active site" evidence="1">
    <location>
        <position position="144"/>
    </location>
</feature>
<feature type="active site" evidence="1">
    <location>
        <position position="168"/>
    </location>
</feature>
<protein>
    <recommendedName>
        <fullName>Pyrrolidone-carboxylate peptidase</fullName>
        <ecNumber>3.4.19.3</ecNumber>
    </recommendedName>
    <alternativeName>
        <fullName>5-oxoprolyl-peptidase</fullName>
    </alternativeName>
    <alternativeName>
        <fullName>Pyroglutamyl-peptidase I</fullName>
        <shortName>PGP-I</shortName>
        <shortName>Pyrase</shortName>
    </alternativeName>
</protein>
<organism>
    <name type="scientific">Bacillus subtilis (strain 168)</name>
    <dbReference type="NCBI Taxonomy" id="224308"/>
    <lineage>
        <taxon>Bacteria</taxon>
        <taxon>Bacillati</taxon>
        <taxon>Bacillota</taxon>
        <taxon>Bacilli</taxon>
        <taxon>Bacillales</taxon>
        <taxon>Bacillaceae</taxon>
        <taxon>Bacillus</taxon>
    </lineage>
</organism>
<comment type="function">
    <text>Removes 5-oxoproline from various penultimate amino acid residues except L-proline.</text>
</comment>
<comment type="catalytic activity">
    <reaction>
        <text>Release of an N-terminal pyroglutamyl group from a polypeptide, the second amino acid generally not being Pro.</text>
        <dbReference type="EC" id="3.4.19.3"/>
    </reaction>
</comment>
<comment type="subunit">
    <text>Homotetramer.</text>
</comment>
<comment type="subcellular location">
    <subcellularLocation>
        <location>Cytoplasm</location>
    </subcellularLocation>
</comment>
<comment type="similarity">
    <text evidence="2">Belongs to the peptidase C15 family.</text>
</comment>
<gene>
    <name type="primary">pcp</name>
    <name type="ordered locus">BSU02650</name>
</gene>
<dbReference type="EC" id="3.4.19.3"/>
<dbReference type="EMBL" id="X66034">
    <property type="protein sequence ID" value="CAA46833.1"/>
    <property type="molecule type" value="Genomic_DNA"/>
</dbReference>
<dbReference type="EMBL" id="D30808">
    <property type="protein sequence ID" value="BAA06485.1"/>
    <property type="molecule type" value="Genomic_DNA"/>
</dbReference>
<dbReference type="EMBL" id="AL009126">
    <property type="protein sequence ID" value="CAB12059.1"/>
    <property type="molecule type" value="Genomic_DNA"/>
</dbReference>
<dbReference type="PIR" id="S23432">
    <property type="entry name" value="S23432"/>
</dbReference>
<dbReference type="RefSeq" id="NP_388147.1">
    <property type="nucleotide sequence ID" value="NC_000964.3"/>
</dbReference>
<dbReference type="RefSeq" id="WP_003246307.1">
    <property type="nucleotide sequence ID" value="NZ_OZ025638.1"/>
</dbReference>
<dbReference type="SMR" id="P28618"/>
<dbReference type="FunCoup" id="P28618">
    <property type="interactions" value="103"/>
</dbReference>
<dbReference type="STRING" id="224308.BSU02650"/>
<dbReference type="MEROPS" id="C15.001"/>
<dbReference type="PaxDb" id="224308-BSU02650"/>
<dbReference type="EnsemblBacteria" id="CAB12059">
    <property type="protein sequence ID" value="CAB12059"/>
    <property type="gene ID" value="BSU_02650"/>
</dbReference>
<dbReference type="GeneID" id="938396"/>
<dbReference type="KEGG" id="bsu:BSU02650"/>
<dbReference type="PATRIC" id="fig|224308.179.peg.275"/>
<dbReference type="eggNOG" id="COG2039">
    <property type="taxonomic scope" value="Bacteria"/>
</dbReference>
<dbReference type="InParanoid" id="P28618"/>
<dbReference type="OrthoDB" id="9779738at2"/>
<dbReference type="PhylomeDB" id="P28618"/>
<dbReference type="BioCyc" id="BSUB:BSU02650-MONOMER"/>
<dbReference type="Proteomes" id="UP000001570">
    <property type="component" value="Chromosome"/>
</dbReference>
<dbReference type="GO" id="GO:0005829">
    <property type="term" value="C:cytosol"/>
    <property type="evidence" value="ECO:0007669"/>
    <property type="project" value="InterPro"/>
</dbReference>
<dbReference type="GO" id="GO:0016920">
    <property type="term" value="F:pyroglutamyl-peptidase activity"/>
    <property type="evidence" value="ECO:0007669"/>
    <property type="project" value="UniProtKB-UniRule"/>
</dbReference>
<dbReference type="GO" id="GO:0006508">
    <property type="term" value="P:proteolysis"/>
    <property type="evidence" value="ECO:0007669"/>
    <property type="project" value="UniProtKB-KW"/>
</dbReference>
<dbReference type="CDD" id="cd00501">
    <property type="entry name" value="Peptidase_C15"/>
    <property type="match status" value="1"/>
</dbReference>
<dbReference type="FunFam" id="3.40.630.20:FF:000001">
    <property type="entry name" value="Pyrrolidone-carboxylate peptidase"/>
    <property type="match status" value="1"/>
</dbReference>
<dbReference type="Gene3D" id="3.40.630.20">
    <property type="entry name" value="Peptidase C15, pyroglutamyl peptidase I-like"/>
    <property type="match status" value="1"/>
</dbReference>
<dbReference type="HAMAP" id="MF_00417">
    <property type="entry name" value="Pyrrolid_peptidase"/>
    <property type="match status" value="1"/>
</dbReference>
<dbReference type="InterPro" id="IPR000816">
    <property type="entry name" value="Peptidase_C15"/>
</dbReference>
<dbReference type="InterPro" id="IPR016125">
    <property type="entry name" value="Peptidase_C15-like"/>
</dbReference>
<dbReference type="InterPro" id="IPR036440">
    <property type="entry name" value="Peptidase_C15-like_sf"/>
</dbReference>
<dbReference type="InterPro" id="IPR029762">
    <property type="entry name" value="PGP-I_bact-type"/>
</dbReference>
<dbReference type="InterPro" id="IPR033694">
    <property type="entry name" value="PGPEP1_Cys_AS"/>
</dbReference>
<dbReference type="InterPro" id="IPR033693">
    <property type="entry name" value="PGPEP1_Glu_AS"/>
</dbReference>
<dbReference type="NCBIfam" id="NF009676">
    <property type="entry name" value="PRK13197.1"/>
    <property type="match status" value="1"/>
</dbReference>
<dbReference type="NCBIfam" id="TIGR00504">
    <property type="entry name" value="pyro_pdase"/>
    <property type="match status" value="1"/>
</dbReference>
<dbReference type="PANTHER" id="PTHR23402">
    <property type="entry name" value="PROTEASE FAMILY C15 PYROGLUTAMYL-PEPTIDASE I-RELATED"/>
    <property type="match status" value="1"/>
</dbReference>
<dbReference type="PANTHER" id="PTHR23402:SF1">
    <property type="entry name" value="PYROGLUTAMYL-PEPTIDASE I"/>
    <property type="match status" value="1"/>
</dbReference>
<dbReference type="Pfam" id="PF01470">
    <property type="entry name" value="Peptidase_C15"/>
    <property type="match status" value="1"/>
</dbReference>
<dbReference type="PIRSF" id="PIRSF015592">
    <property type="entry name" value="Prld-crbxl_pptds"/>
    <property type="match status" value="1"/>
</dbReference>
<dbReference type="PRINTS" id="PR00706">
    <property type="entry name" value="PYROGLUPTASE"/>
</dbReference>
<dbReference type="SUPFAM" id="SSF53182">
    <property type="entry name" value="Pyrrolidone carboxyl peptidase (pyroglutamate aminopeptidase)"/>
    <property type="match status" value="1"/>
</dbReference>
<dbReference type="PROSITE" id="PS01334">
    <property type="entry name" value="PYRASE_CYS"/>
    <property type="match status" value="1"/>
</dbReference>
<dbReference type="PROSITE" id="PS01333">
    <property type="entry name" value="PYRASE_GLU"/>
    <property type="match status" value="1"/>
</dbReference>
<sequence>MRKKVLITGFDPFDKETVNPSWEAAKRLNGFETEEAIITAEQIPTVFRSALDTLRQAIQKHQPDIVICVGQAGGRMQITPERVAINLADARIPDNEGHQPIDEEISPDGPAAYWTRLPVKRMTAKMKEHGIPAAVSYTAGTFVCNYLFYGLMDHISRTSPHIRGGFIHIPYIPQQTIDKTAPSLSLDTIVRALRIAAVTAAQYDEDVKSPGGTLH</sequence>
<evidence type="ECO:0000250" key="1"/>
<evidence type="ECO:0000305" key="2"/>